<reference key="1">
    <citation type="journal article" date="2008" name="Appl. Environ. Microbiol.">
        <title>Genome of the epsilonproteobacterial chemolithoautotroph Sulfurimonas denitrificans.</title>
        <authorList>
            <person name="Sievert S.M."/>
            <person name="Scott K.M."/>
            <person name="Klotz M.G."/>
            <person name="Chain P.S.G."/>
            <person name="Hauser L.J."/>
            <person name="Hemp J."/>
            <person name="Huegler M."/>
            <person name="Land M."/>
            <person name="Lapidus A."/>
            <person name="Larimer F.W."/>
            <person name="Lucas S."/>
            <person name="Malfatti S.A."/>
            <person name="Meyer F."/>
            <person name="Paulsen I.T."/>
            <person name="Ren Q."/>
            <person name="Simon J."/>
            <person name="Bailey K."/>
            <person name="Diaz E."/>
            <person name="Fitzpatrick K.A."/>
            <person name="Glover B."/>
            <person name="Gwatney N."/>
            <person name="Korajkic A."/>
            <person name="Long A."/>
            <person name="Mobberley J.M."/>
            <person name="Pantry S.N."/>
            <person name="Pazder G."/>
            <person name="Peterson S."/>
            <person name="Quintanilla J.D."/>
            <person name="Sprinkle R."/>
            <person name="Stephens J."/>
            <person name="Thomas P."/>
            <person name="Vaughn R."/>
            <person name="Weber M.J."/>
            <person name="Wooten L.L."/>
        </authorList>
    </citation>
    <scope>NUCLEOTIDE SEQUENCE [LARGE SCALE GENOMIC DNA]</scope>
    <source>
        <strain>ATCC 33889 / DSM 1251</strain>
    </source>
</reference>
<protein>
    <recommendedName>
        <fullName evidence="1">Small ribosomal subunit protein uS17</fullName>
    </recommendedName>
    <alternativeName>
        <fullName evidence="2">30S ribosomal protein S17</fullName>
    </alternativeName>
</protein>
<dbReference type="EMBL" id="CP000153">
    <property type="protein sequence ID" value="ABB43576.1"/>
    <property type="molecule type" value="Genomic_DNA"/>
</dbReference>
<dbReference type="RefSeq" id="WP_011371931.1">
    <property type="nucleotide sequence ID" value="NC_007575.1"/>
</dbReference>
<dbReference type="SMR" id="Q30TV5"/>
<dbReference type="STRING" id="326298.Suden_0295"/>
<dbReference type="KEGG" id="tdn:Suden_0295"/>
<dbReference type="eggNOG" id="COG0186">
    <property type="taxonomic scope" value="Bacteria"/>
</dbReference>
<dbReference type="HOGENOM" id="CLU_073626_1_1_7"/>
<dbReference type="OrthoDB" id="9811714at2"/>
<dbReference type="Proteomes" id="UP000002714">
    <property type="component" value="Chromosome"/>
</dbReference>
<dbReference type="GO" id="GO:0022627">
    <property type="term" value="C:cytosolic small ribosomal subunit"/>
    <property type="evidence" value="ECO:0007669"/>
    <property type="project" value="TreeGrafter"/>
</dbReference>
<dbReference type="GO" id="GO:0019843">
    <property type="term" value="F:rRNA binding"/>
    <property type="evidence" value="ECO:0007669"/>
    <property type="project" value="UniProtKB-UniRule"/>
</dbReference>
<dbReference type="GO" id="GO:0003735">
    <property type="term" value="F:structural constituent of ribosome"/>
    <property type="evidence" value="ECO:0007669"/>
    <property type="project" value="InterPro"/>
</dbReference>
<dbReference type="GO" id="GO:0006412">
    <property type="term" value="P:translation"/>
    <property type="evidence" value="ECO:0007669"/>
    <property type="project" value="UniProtKB-UniRule"/>
</dbReference>
<dbReference type="CDD" id="cd00364">
    <property type="entry name" value="Ribosomal_uS17"/>
    <property type="match status" value="1"/>
</dbReference>
<dbReference type="Gene3D" id="2.40.50.140">
    <property type="entry name" value="Nucleic acid-binding proteins"/>
    <property type="match status" value="1"/>
</dbReference>
<dbReference type="HAMAP" id="MF_01345_B">
    <property type="entry name" value="Ribosomal_uS17_B"/>
    <property type="match status" value="1"/>
</dbReference>
<dbReference type="InterPro" id="IPR012340">
    <property type="entry name" value="NA-bd_OB-fold"/>
</dbReference>
<dbReference type="InterPro" id="IPR000266">
    <property type="entry name" value="Ribosomal_uS17"/>
</dbReference>
<dbReference type="InterPro" id="IPR019984">
    <property type="entry name" value="Ribosomal_uS17_bact/chlr"/>
</dbReference>
<dbReference type="InterPro" id="IPR019979">
    <property type="entry name" value="Ribosomal_uS17_CS"/>
</dbReference>
<dbReference type="NCBIfam" id="NF004123">
    <property type="entry name" value="PRK05610.1"/>
    <property type="match status" value="1"/>
</dbReference>
<dbReference type="NCBIfam" id="TIGR03635">
    <property type="entry name" value="uS17_bact"/>
    <property type="match status" value="1"/>
</dbReference>
<dbReference type="PANTHER" id="PTHR10744">
    <property type="entry name" value="40S RIBOSOMAL PROTEIN S11 FAMILY MEMBER"/>
    <property type="match status" value="1"/>
</dbReference>
<dbReference type="PANTHER" id="PTHR10744:SF1">
    <property type="entry name" value="SMALL RIBOSOMAL SUBUNIT PROTEIN US17M"/>
    <property type="match status" value="1"/>
</dbReference>
<dbReference type="Pfam" id="PF00366">
    <property type="entry name" value="Ribosomal_S17"/>
    <property type="match status" value="1"/>
</dbReference>
<dbReference type="PRINTS" id="PR00973">
    <property type="entry name" value="RIBOSOMALS17"/>
</dbReference>
<dbReference type="SUPFAM" id="SSF50249">
    <property type="entry name" value="Nucleic acid-binding proteins"/>
    <property type="match status" value="1"/>
</dbReference>
<dbReference type="PROSITE" id="PS00056">
    <property type="entry name" value="RIBOSOMAL_S17"/>
    <property type="match status" value="1"/>
</dbReference>
<proteinExistence type="inferred from homology"/>
<gene>
    <name evidence="1" type="primary">rpsQ</name>
    <name type="ordered locus">Suden_0295</name>
</gene>
<organism>
    <name type="scientific">Sulfurimonas denitrificans (strain ATCC 33889 / DSM 1251)</name>
    <name type="common">Thiomicrospira denitrificans (strain ATCC 33889 / DSM 1251)</name>
    <dbReference type="NCBI Taxonomy" id="326298"/>
    <lineage>
        <taxon>Bacteria</taxon>
        <taxon>Pseudomonadati</taxon>
        <taxon>Campylobacterota</taxon>
        <taxon>Epsilonproteobacteria</taxon>
        <taxon>Campylobacterales</taxon>
        <taxon>Sulfurimonadaceae</taxon>
        <taxon>Sulfurimonas</taxon>
    </lineage>
</organism>
<sequence length="82" mass="9542">MTHKREIQGNVVKISGDKTASIVVERRVMHPRYHKVVKRFKKYLVHDERNELKVGDEIVAIECRPLSKTKSYRLKSVVVGVK</sequence>
<name>RS17_SULDN</name>
<accession>Q30TV5</accession>
<keyword id="KW-1185">Reference proteome</keyword>
<keyword id="KW-0687">Ribonucleoprotein</keyword>
<keyword id="KW-0689">Ribosomal protein</keyword>
<keyword id="KW-0694">RNA-binding</keyword>
<keyword id="KW-0699">rRNA-binding</keyword>
<comment type="function">
    <text evidence="1">One of the primary rRNA binding proteins, it binds specifically to the 5'-end of 16S ribosomal RNA.</text>
</comment>
<comment type="subunit">
    <text evidence="1">Part of the 30S ribosomal subunit.</text>
</comment>
<comment type="similarity">
    <text evidence="1">Belongs to the universal ribosomal protein uS17 family.</text>
</comment>
<evidence type="ECO:0000255" key="1">
    <source>
        <dbReference type="HAMAP-Rule" id="MF_01345"/>
    </source>
</evidence>
<evidence type="ECO:0000305" key="2"/>
<feature type="chain" id="PRO_0000233598" description="Small ribosomal subunit protein uS17">
    <location>
        <begin position="1"/>
        <end position="82"/>
    </location>
</feature>